<reference key="1">
    <citation type="journal article" date="1992" name="J. Bacteriol.">
        <title>Klebsiella aerogenes urease gene cluster: sequence of ureD and demonstration that four accessory genes (ureD, ureE, ureF, and ureG) are involved in nickel metallocenter biosynthesis.</title>
        <authorList>
            <person name="Lee M.H."/>
            <person name="Mulrooney S.B."/>
            <person name="Renner M.J."/>
            <person name="Markowicz Y."/>
            <person name="Hausinger R.P."/>
        </authorList>
    </citation>
    <scope>NUCLEOTIDE SEQUENCE [GENOMIC DNA]</scope>
</reference>
<reference key="2">
    <citation type="journal article" date="1994" name="Proc. Natl. Acad. Sci. U.S.A.">
        <title>In vitro activation of urease apoprotein and role of UreD as a chaperone required for nickel metallocenter assembly.</title>
        <authorList>
            <person name="Park I.-S."/>
            <person name="Carr M.B."/>
            <person name="Hausinger R.P."/>
        </authorList>
    </citation>
    <scope>INTERACTION WITH UREASE APOPROTEIN</scope>
    <scope>POSSIBLE CHAPERONE ACTIVITY IN NICKEL METALLOCENTER ASSEMBLY</scope>
</reference>
<reference key="3">
    <citation type="journal article" date="1995" name="J. Bacteriol.">
        <title>Evidence for the presence of urease apoprotein complexes containing UreD, UreF, and UreG in cells that are competent for in vivo enzyme activation.</title>
        <authorList>
            <person name="Park I.-S."/>
            <person name="Hausinger R.P."/>
        </authorList>
    </citation>
    <scope>CATALYTIC ACTIVITY</scope>
    <scope>INTERACTION WITH UREA; UREB; UREC; UREF AND UREG</scope>
</reference>
<reference key="4">
    <citation type="journal article" date="1999" name="Proc. Natl. Acad. Sci. U.S.A.">
        <title>GTP-dependent activation of urease apoprotein in complex with the UreD, UreF, and UreG accessory proteins.</title>
        <authorList>
            <person name="Soriano A."/>
            <person name="Hausinger R.P."/>
        </authorList>
    </citation>
    <scope>COMPLEX FORMATION</scope>
    <scope>INTERACTION WITH UREA; UREB; UREC; UREF AND UREG</scope>
</reference>
<reference key="5">
    <citation type="journal article" date="2004" name="J. Biol. Chem.">
        <title>Chemical cross-linking and mass spectrometric identification of sites of interaction for UreD, UreF, and urease.</title>
        <authorList>
            <person name="Chang Z."/>
            <person name="Kuchar J."/>
            <person name="Hausinger R.P."/>
        </authorList>
    </citation>
    <scope>INTERACTION WITH UREB AND UREC</scope>
    <scope>IDENTIFICATION BY MASS SPECTROMETRY</scope>
</reference>
<comment type="function">
    <text>Necessary for the functional incorporation of the urease nickel metallocenter.</text>
</comment>
<comment type="subunit">
    <text>UreD, UreF and UreG form a complex that acts as a GTP-hydrolysis-dependent molecular chaperone, activating the urease apoprotein by helping to assemble the nickel containing metallocenter of UreC. The complex may form in the order UreABCD, UreABCDF, UreABCDFG. The UreE protein probably delivers the nickel in a GTPase-dependent fashion.</text>
</comment>
<comment type="interaction">
    <interactant intactId="EBI-6410589">
        <id>Q09063</id>
    </interactant>
    <interactant intactId="EBI-6410604">
        <id>P18318</id>
        <label>ureF</label>
    </interactant>
    <organismsDiffer>false</organismsDiffer>
    <experiments>4</experiments>
</comment>
<comment type="interaction">
    <interactant intactId="EBI-6410589">
        <id>Q09063</id>
    </interactant>
    <interactant intactId="EBI-6410613">
        <id>P18319</id>
        <label>ureG</label>
    </interactant>
    <organismsDiffer>false</organismsDiffer>
    <experiments>4</experiments>
</comment>
<comment type="subcellular location">
    <subcellularLocation>
        <location evidence="1">Cytoplasm</location>
    </subcellularLocation>
</comment>
<comment type="similarity">
    <text evidence="1">Belongs to the UreD family.</text>
</comment>
<sequence>MLPPLKKGWQATLDLRFHQAGGKTVLASAQHVGPLTVQRPFYPEEETCHLYLLHPPGGIVGGDELTISAHLAPGCHTLITMPGASKFYRSSGAQALVRQQLTLAPQATLEWLPQDAIFFPGANARLFTTFHLCASSRLLAWDLLCLGRPVIGETFSHGTLSNRLEVWVDNEPLLVERLHLQEGELSSIAERPWVGTLLCYPATDALLDGVRDALAPLGLYAGASLTDRLLTVRFLSDDNLICQRVMRDVWQFLRPHLTGKSPVLPRIWLT</sequence>
<name>URED_KLEAE</name>
<organism>
    <name type="scientific">Klebsiella aerogenes</name>
    <name type="common">Enterobacter aerogenes</name>
    <dbReference type="NCBI Taxonomy" id="548"/>
    <lineage>
        <taxon>Bacteria</taxon>
        <taxon>Pseudomonadati</taxon>
        <taxon>Pseudomonadota</taxon>
        <taxon>Gammaproteobacteria</taxon>
        <taxon>Enterobacterales</taxon>
        <taxon>Enterobacteriaceae</taxon>
        <taxon>Klebsiella/Raoultella group</taxon>
        <taxon>Klebsiella</taxon>
    </lineage>
</organism>
<feature type="chain" id="PRO_0000067611" description="Urease accessory protein UreD">
    <location>
        <begin position="1"/>
        <end position="270"/>
    </location>
</feature>
<keyword id="KW-0143">Chaperone</keyword>
<keyword id="KW-0963">Cytoplasm</keyword>
<keyword id="KW-0996">Nickel insertion</keyword>
<accession>Q09063</accession>
<gene>
    <name evidence="1" type="primary">ureD</name>
</gene>
<proteinExistence type="evidence at protein level"/>
<protein>
    <recommendedName>
        <fullName evidence="1">Urease accessory protein UreD</fullName>
    </recommendedName>
</protein>
<evidence type="ECO:0000255" key="1">
    <source>
        <dbReference type="HAMAP-Rule" id="MF_01384"/>
    </source>
</evidence>
<dbReference type="EMBL" id="M55391">
    <property type="protein sequence ID" value="AAA25148.1"/>
    <property type="molecule type" value="Genomic_DNA"/>
</dbReference>
<dbReference type="SMR" id="Q09063"/>
<dbReference type="IntAct" id="Q09063">
    <property type="interactions" value="6"/>
</dbReference>
<dbReference type="GO" id="GO:0005737">
    <property type="term" value="C:cytoplasm"/>
    <property type="evidence" value="ECO:0007669"/>
    <property type="project" value="UniProtKB-SubCell"/>
</dbReference>
<dbReference type="GO" id="GO:0016151">
    <property type="term" value="F:nickel cation binding"/>
    <property type="evidence" value="ECO:0007669"/>
    <property type="project" value="UniProtKB-UniRule"/>
</dbReference>
<dbReference type="HAMAP" id="MF_01384">
    <property type="entry name" value="UreD"/>
    <property type="match status" value="1"/>
</dbReference>
<dbReference type="InterPro" id="IPR002669">
    <property type="entry name" value="UreD"/>
</dbReference>
<dbReference type="PANTHER" id="PTHR33643">
    <property type="entry name" value="UREASE ACCESSORY PROTEIN D"/>
    <property type="match status" value="1"/>
</dbReference>
<dbReference type="PANTHER" id="PTHR33643:SF1">
    <property type="entry name" value="UREASE ACCESSORY PROTEIN D"/>
    <property type="match status" value="1"/>
</dbReference>
<dbReference type="Pfam" id="PF01774">
    <property type="entry name" value="UreD"/>
    <property type="match status" value="1"/>
</dbReference>